<proteinExistence type="evidence at protein level"/>
<protein>
    <recommendedName>
        <fullName>Flagellar hook-basal body complex protein FliE</fullName>
    </recommendedName>
</protein>
<gene>
    <name type="primary">fliE</name>
    <name type="synonym">fla AI</name>
    <name type="synonym">flaN</name>
    <name type="ordered locus">STM1968</name>
</gene>
<comment type="subcellular location">
    <subcellularLocation>
        <location evidence="2">Bacterial flagellum basal body</location>
    </subcellularLocation>
</comment>
<comment type="similarity">
    <text evidence="2">Belongs to the FliE family.</text>
</comment>
<organism>
    <name type="scientific">Salmonella typhimurium (strain LT2 / SGSC1412 / ATCC 700720)</name>
    <dbReference type="NCBI Taxonomy" id="99287"/>
    <lineage>
        <taxon>Bacteria</taxon>
        <taxon>Pseudomonadati</taxon>
        <taxon>Pseudomonadota</taxon>
        <taxon>Gammaproteobacteria</taxon>
        <taxon>Enterobacterales</taxon>
        <taxon>Enterobacteriaceae</taxon>
        <taxon>Salmonella</taxon>
    </lineage>
</organism>
<name>FLIE_SALTY</name>
<keyword id="KW-0002">3D-structure</keyword>
<keyword id="KW-0975">Bacterial flagellum</keyword>
<keyword id="KW-0903">Direct protein sequencing</keyword>
<keyword id="KW-1185">Reference proteome</keyword>
<sequence>MAAIQGIEGVISQLQATAMAARGQDTHSQSTVSFAGQLHAALDRISDRQAAARVQAEKFTLGEPGIALNDVMADMQKASVSMQMGIQVRNKLVAAYQEVMSMQV</sequence>
<dbReference type="EMBL" id="M84993">
    <property type="protein sequence ID" value="AAA27095.1"/>
    <property type="molecule type" value="Genomic_DNA"/>
</dbReference>
<dbReference type="EMBL" id="L13280">
    <property type="protein sequence ID" value="AAA71974.1"/>
    <property type="status" value="ALT_SEQ"/>
    <property type="molecule type" value="Unassigned_DNA"/>
</dbReference>
<dbReference type="EMBL" id="AE006468">
    <property type="protein sequence ID" value="AAL20880.1"/>
    <property type="molecule type" value="Genomic_DNA"/>
</dbReference>
<dbReference type="PIR" id="B42376">
    <property type="entry name" value="B42376"/>
</dbReference>
<dbReference type="RefSeq" id="NP_460921.1">
    <property type="nucleotide sequence ID" value="NC_003197.2"/>
</dbReference>
<dbReference type="RefSeq" id="WP_000719036.1">
    <property type="nucleotide sequence ID" value="NC_003197.2"/>
</dbReference>
<dbReference type="PDB" id="7BIN">
    <property type="method" value="EM"/>
    <property type="resolution" value="3.20 A"/>
    <property type="chains" value="K/L/M/N/O/P=1-104"/>
</dbReference>
<dbReference type="PDB" id="7CG4">
    <property type="method" value="EM"/>
    <property type="resolution" value="3.60 A"/>
    <property type="chains" value="a/b/c/d/e/f=1-104"/>
</dbReference>
<dbReference type="PDB" id="7CGO">
    <property type="method" value="EM"/>
    <property type="resolution" value="3.90 A"/>
    <property type="chains" value="q/r/s/t/u/v=1-104"/>
</dbReference>
<dbReference type="PDB" id="7E80">
    <property type="method" value="EM"/>
    <property type="resolution" value="3.67 A"/>
    <property type="chains" value="q/r/s/t/u/v=1-104"/>
</dbReference>
<dbReference type="PDB" id="7E82">
    <property type="method" value="EM"/>
    <property type="resolution" value="3.30 A"/>
    <property type="chains" value="q/r/s/t/u/v=1-104"/>
</dbReference>
<dbReference type="PDB" id="8WK3">
    <property type="method" value="EM"/>
    <property type="resolution" value="3.30 A"/>
    <property type="chains" value="K/L/M/N/O/P=1-104"/>
</dbReference>
<dbReference type="PDB" id="8WK4">
    <property type="method" value="EM"/>
    <property type="resolution" value="3.70 A"/>
    <property type="chains" value="i/j/k/l/m/n=1-104"/>
</dbReference>
<dbReference type="PDB" id="8WKK">
    <property type="method" value="EM"/>
    <property type="resolution" value="3.30 A"/>
    <property type="chains" value="K/L/M/N/O/P=1-104"/>
</dbReference>
<dbReference type="PDB" id="8WKQ">
    <property type="method" value="EM"/>
    <property type="resolution" value="3.80 A"/>
    <property type="chains" value="K/L/M/N/O/P=1-104"/>
</dbReference>
<dbReference type="PDB" id="8WL2">
    <property type="method" value="EM"/>
    <property type="resolution" value="3.40 A"/>
    <property type="chains" value="A1/A2/A3/A4/A5/Az=1-104"/>
</dbReference>
<dbReference type="PDB" id="8WLH">
    <property type="method" value="EM"/>
    <property type="resolution" value="3.70 A"/>
    <property type="chains" value="K/L/M/N/O/P=1-104"/>
</dbReference>
<dbReference type="PDB" id="8WLN">
    <property type="method" value="EM"/>
    <property type="resolution" value="4.30 A"/>
    <property type="chains" value="K/L/M/N/O/P=1-104"/>
</dbReference>
<dbReference type="PDB" id="8WLQ">
    <property type="method" value="EM"/>
    <property type="resolution" value="3.80 A"/>
    <property type="chains" value="K/L/M/N/O/P=1-104"/>
</dbReference>
<dbReference type="PDB" id="8WLT">
    <property type="method" value="EM"/>
    <property type="resolution" value="4.10 A"/>
    <property type="chains" value="A1/A2/A3/A4/A5/Az=1-104"/>
</dbReference>
<dbReference type="PDB" id="8WO5">
    <property type="method" value="EM"/>
    <property type="resolution" value="7.40 A"/>
    <property type="chains" value="A1/A2/A3/A4/A5/Az=1-104"/>
</dbReference>
<dbReference type="PDB" id="8WOE">
    <property type="method" value="EM"/>
    <property type="resolution" value="4.30 A"/>
    <property type="chains" value="A1/A2/A3/A4/A5/Az=1-104"/>
</dbReference>
<dbReference type="PDBsum" id="7BIN"/>
<dbReference type="PDBsum" id="7CG4"/>
<dbReference type="PDBsum" id="7CGO"/>
<dbReference type="PDBsum" id="7E80"/>
<dbReference type="PDBsum" id="7E82"/>
<dbReference type="PDBsum" id="8WK3"/>
<dbReference type="PDBsum" id="8WK4"/>
<dbReference type="PDBsum" id="8WKK"/>
<dbReference type="PDBsum" id="8WKQ"/>
<dbReference type="PDBsum" id="8WL2"/>
<dbReference type="PDBsum" id="8WLH"/>
<dbReference type="PDBsum" id="8WLN"/>
<dbReference type="PDBsum" id="8WLQ"/>
<dbReference type="PDBsum" id="8WLT"/>
<dbReference type="PDBsum" id="8WO5"/>
<dbReference type="PDBsum" id="8WOE"/>
<dbReference type="EMDB" id="EMD-12192"/>
<dbReference type="EMDB" id="EMD-30350"/>
<dbReference type="EMDB" id="EMD-30359"/>
<dbReference type="EMDB" id="EMD-31006"/>
<dbReference type="EMDB" id="EMD-31008"/>
<dbReference type="EMDB" id="EMD-37594"/>
<dbReference type="EMDB" id="EMD-37595"/>
<dbReference type="EMDB" id="EMD-37601"/>
<dbReference type="EMDB" id="EMD-37605"/>
<dbReference type="EMDB" id="EMD-37611"/>
<dbReference type="EMDB" id="EMD-37619"/>
<dbReference type="EMDB" id="EMD-37625"/>
<dbReference type="EMDB" id="EMD-37628"/>
<dbReference type="EMDB" id="EMD-37630"/>
<dbReference type="EMDB" id="EMD-37679"/>
<dbReference type="EMDB" id="EMD-37684"/>
<dbReference type="SMR" id="P26462"/>
<dbReference type="STRING" id="99287.STM1968"/>
<dbReference type="PaxDb" id="99287-STM1968"/>
<dbReference type="DNASU" id="1253489"/>
<dbReference type="GeneID" id="1253489"/>
<dbReference type="KEGG" id="stm:STM1968"/>
<dbReference type="PATRIC" id="fig|99287.12.peg.2084"/>
<dbReference type="HOGENOM" id="CLU_147249_0_2_6"/>
<dbReference type="OMA" id="NDVMIDM"/>
<dbReference type="PhylomeDB" id="P26462"/>
<dbReference type="BioCyc" id="SENT99287:STM1968-MONOMER"/>
<dbReference type="Proteomes" id="UP000001014">
    <property type="component" value="Chromosome"/>
</dbReference>
<dbReference type="GO" id="GO:0009425">
    <property type="term" value="C:bacterial-type flagellum basal body"/>
    <property type="evidence" value="ECO:0007669"/>
    <property type="project" value="UniProtKB-SubCell"/>
</dbReference>
<dbReference type="GO" id="GO:0003774">
    <property type="term" value="F:cytoskeletal motor activity"/>
    <property type="evidence" value="ECO:0007669"/>
    <property type="project" value="InterPro"/>
</dbReference>
<dbReference type="GO" id="GO:0005198">
    <property type="term" value="F:structural molecule activity"/>
    <property type="evidence" value="ECO:0007669"/>
    <property type="project" value="InterPro"/>
</dbReference>
<dbReference type="GO" id="GO:0044780">
    <property type="term" value="P:bacterial-type flagellum assembly"/>
    <property type="evidence" value="ECO:0000318"/>
    <property type="project" value="GO_Central"/>
</dbReference>
<dbReference type="GO" id="GO:0071973">
    <property type="term" value="P:bacterial-type flagellum-dependent cell motility"/>
    <property type="evidence" value="ECO:0007669"/>
    <property type="project" value="InterPro"/>
</dbReference>
<dbReference type="HAMAP" id="MF_00724">
    <property type="entry name" value="FliE"/>
    <property type="match status" value="1"/>
</dbReference>
<dbReference type="InterPro" id="IPR001624">
    <property type="entry name" value="FliE"/>
</dbReference>
<dbReference type="NCBIfam" id="TIGR00205">
    <property type="entry name" value="fliE"/>
    <property type="match status" value="1"/>
</dbReference>
<dbReference type="PANTHER" id="PTHR34653">
    <property type="match status" value="1"/>
</dbReference>
<dbReference type="PANTHER" id="PTHR34653:SF1">
    <property type="entry name" value="FLAGELLAR HOOK-BASAL BODY COMPLEX PROTEIN FLIE"/>
    <property type="match status" value="1"/>
</dbReference>
<dbReference type="Pfam" id="PF02049">
    <property type="entry name" value="FliE"/>
    <property type="match status" value="1"/>
</dbReference>
<dbReference type="PRINTS" id="PR01006">
    <property type="entry name" value="FLGHOOKFLIE"/>
</dbReference>
<accession>P26462</accession>
<feature type="initiator methionine" description="Removed" evidence="1">
    <location>
        <position position="1"/>
    </location>
</feature>
<feature type="chain" id="PRO_0000105564" description="Flagellar hook-basal body complex protein FliE">
    <location>
        <begin position="2"/>
        <end position="104"/>
    </location>
</feature>
<feature type="helix" evidence="3">
    <location>
        <begin position="34"/>
        <end position="61"/>
    </location>
</feature>
<feature type="helix" evidence="3">
    <location>
        <begin position="68"/>
        <end position="100"/>
    </location>
</feature>
<evidence type="ECO:0000269" key="1">
    <source>
    </source>
</evidence>
<evidence type="ECO:0000305" key="2"/>
<evidence type="ECO:0007829" key="3">
    <source>
        <dbReference type="PDB" id="7BIN"/>
    </source>
</evidence>
<reference key="1">
    <citation type="journal article" date="1989" name="J. Bacteriol.">
        <title>L-, P-, and M-ring proteins of the flagellar basal body of Salmonella typhimurium: gene sequences and deduced protein sequences.</title>
        <authorList>
            <person name="Jones C.J."/>
            <person name="Homma M."/>
            <person name="Macnab R.M."/>
        </authorList>
    </citation>
    <scope>NUCLEOTIDE SEQUENCE [GENOMIC DNA]</scope>
</reference>
<reference key="2">
    <citation type="journal article" date="1992" name="J. Bacteriol.">
        <title>Characterization of the fliE genes of Escherichia coli and Salmonella typhimurium and identification of the FliE protein as a component of the flagellar hook-basal body complex.</title>
        <authorList>
            <person name="Mueller V."/>
            <person name="Jones C.J."/>
            <person name="Kawagishi I."/>
            <person name="Aizawa S."/>
            <person name="Macnab R.M."/>
        </authorList>
    </citation>
    <scope>NUCLEOTIDE SEQUENCE [GENOMIC DNA]</scope>
    <scope>PROTEIN SEQUENCE OF 2-18</scope>
    <source>
        <strain>SJW1103</strain>
    </source>
</reference>
<reference key="3">
    <citation type="journal article" date="2001" name="Nature">
        <title>Complete genome sequence of Salmonella enterica serovar Typhimurium LT2.</title>
        <authorList>
            <person name="McClelland M."/>
            <person name="Sanderson K.E."/>
            <person name="Spieth J."/>
            <person name="Clifton S.W."/>
            <person name="Latreille P."/>
            <person name="Courtney L."/>
            <person name="Porwollik S."/>
            <person name="Ali J."/>
            <person name="Dante M."/>
            <person name="Du F."/>
            <person name="Hou S."/>
            <person name="Layman D."/>
            <person name="Leonard S."/>
            <person name="Nguyen C."/>
            <person name="Scott K."/>
            <person name="Holmes A."/>
            <person name="Grewal N."/>
            <person name="Mulvaney E."/>
            <person name="Ryan E."/>
            <person name="Sun H."/>
            <person name="Florea L."/>
            <person name="Miller W."/>
            <person name="Stoneking T."/>
            <person name="Nhan M."/>
            <person name="Waterston R."/>
            <person name="Wilson R.K."/>
        </authorList>
    </citation>
    <scope>NUCLEOTIDE SEQUENCE [LARGE SCALE GENOMIC DNA]</scope>
    <source>
        <strain>LT2 / SGSC1412 / ATCC 700720</strain>
    </source>
</reference>